<gene>
    <name type="primary">EMH2</name>
</gene>
<sequence length="93" mass="9987">MASGQQERSQLDRKAREGETVVPGGTGGKSLEAHENLAEGRSRGGQTRREQMGEEGYSEMGRKGGLSTNDESGGERAAREGIDIDESKFKTKS</sequence>
<keyword id="KW-1185">Reference proteome</keyword>
<keyword id="KW-0346">Stress response</keyword>
<feature type="chain" id="PRO_0000185691" description="Em protein H2">
    <location>
        <begin position="1"/>
        <end position="93"/>
    </location>
</feature>
<feature type="region of interest" description="Disordered" evidence="1">
    <location>
        <begin position="1"/>
        <end position="93"/>
    </location>
</feature>
<feature type="compositionally biased region" description="Basic and acidic residues" evidence="1">
    <location>
        <begin position="9"/>
        <end position="19"/>
    </location>
</feature>
<feature type="compositionally biased region" description="Basic and acidic residues" evidence="1">
    <location>
        <begin position="31"/>
        <end position="52"/>
    </location>
</feature>
<feature type="compositionally biased region" description="Basic and acidic residues" evidence="1">
    <location>
        <begin position="73"/>
        <end position="93"/>
    </location>
</feature>
<dbReference type="EMBL" id="X73229">
    <property type="protein sequence ID" value="CAA51701.1"/>
    <property type="molecule type" value="mRNA"/>
</dbReference>
<dbReference type="EMBL" id="X73227">
    <property type="protein sequence ID" value="CAA51700.1"/>
    <property type="molecule type" value="Genomic_DNA"/>
</dbReference>
<dbReference type="PIR" id="S43333">
    <property type="entry name" value="S43333"/>
</dbReference>
<dbReference type="STRING" id="4565.Q08000"/>
<dbReference type="eggNOG" id="ENOG502S40U">
    <property type="taxonomic scope" value="Eukaryota"/>
</dbReference>
<dbReference type="Proteomes" id="UP000019116">
    <property type="component" value="Unplaced"/>
</dbReference>
<dbReference type="GO" id="GO:0009737">
    <property type="term" value="P:response to abscisic acid"/>
    <property type="evidence" value="ECO:0000318"/>
    <property type="project" value="GO_Central"/>
</dbReference>
<dbReference type="InterPro" id="IPR038956">
    <property type="entry name" value="LEA_5"/>
</dbReference>
<dbReference type="InterPro" id="IPR022377">
    <property type="entry name" value="Sm_Hydphi_plant_seed_CS"/>
</dbReference>
<dbReference type="InterPro" id="IPR000389">
    <property type="entry name" value="Small_hydrophilic_seed_prot"/>
</dbReference>
<dbReference type="PANTHER" id="PTHR34671:SF14">
    <property type="entry name" value="EM PROTEIN"/>
    <property type="match status" value="1"/>
</dbReference>
<dbReference type="PANTHER" id="PTHR34671">
    <property type="entry name" value="EM-LIKE PROTEIN GEA1"/>
    <property type="match status" value="1"/>
</dbReference>
<dbReference type="Pfam" id="PF00477">
    <property type="entry name" value="LEA_5"/>
    <property type="match status" value="1"/>
</dbReference>
<dbReference type="PROSITE" id="PS00431">
    <property type="entry name" value="SMALL_HYDR_PLANT_SEED"/>
    <property type="match status" value="1"/>
</dbReference>
<organism>
    <name type="scientific">Triticum aestivum</name>
    <name type="common">Wheat</name>
    <dbReference type="NCBI Taxonomy" id="4565"/>
    <lineage>
        <taxon>Eukaryota</taxon>
        <taxon>Viridiplantae</taxon>
        <taxon>Streptophyta</taxon>
        <taxon>Embryophyta</taxon>
        <taxon>Tracheophyta</taxon>
        <taxon>Spermatophyta</taxon>
        <taxon>Magnoliopsida</taxon>
        <taxon>Liliopsida</taxon>
        <taxon>Poales</taxon>
        <taxon>Poaceae</taxon>
        <taxon>BOP clade</taxon>
        <taxon>Pooideae</taxon>
        <taxon>Triticodae</taxon>
        <taxon>Triticeae</taxon>
        <taxon>Triticinae</taxon>
        <taxon>Triticum</taxon>
    </lineage>
</organism>
<proteinExistence type="evidence at transcript level"/>
<evidence type="ECO:0000256" key="1">
    <source>
        <dbReference type="SAM" id="MobiDB-lite"/>
    </source>
</evidence>
<evidence type="ECO:0000305" key="2"/>
<accession>Q08000</accession>
<comment type="function">
    <text>It is thought to provide protection for the cytoplasm during the desiccation stage of embryo development.</text>
</comment>
<comment type="developmental stage">
    <text>Expressed principally in the later stages of embryogenesis prior to dehydration of the grain.</text>
</comment>
<comment type="induction">
    <text>By abscisic acid (ABA) and osmotic stress.</text>
</comment>
<comment type="miscellaneous">
    <text>Wheat contains at least 10 different genes for Em protein.</text>
</comment>
<comment type="similarity">
    <text evidence="2">Belongs to the small hydrophilic plant seed protein family.</text>
</comment>
<reference key="1">
    <citation type="journal article" date="1993" name="Plant Mol. Biol.">
        <title>Sequence analysis of two tandemly linked Em genes from wheat.</title>
        <authorList>
            <person name="Futers T.S."/>
            <person name="Onde S."/>
            <person name="Turet M."/>
            <person name="Cuming A.C."/>
        </authorList>
    </citation>
    <scope>NUCLEOTIDE SEQUENCE [GENOMIC DNA / MRNA]</scope>
    <source>
        <strain>cv. Chinese Spring</strain>
        <tissue>Dry seed</tissue>
    </source>
</reference>
<protein>
    <recommendedName>
        <fullName>Em protein H2</fullName>
    </recommendedName>
</protein>
<name>EM3_WHEAT</name>